<name>PSD_RICB8</name>
<proteinExistence type="inferred from homology"/>
<keyword id="KW-1003">Cell membrane</keyword>
<keyword id="KW-0210">Decarboxylase</keyword>
<keyword id="KW-0444">Lipid biosynthesis</keyword>
<keyword id="KW-0443">Lipid metabolism</keyword>
<keyword id="KW-0456">Lyase</keyword>
<keyword id="KW-0472">Membrane</keyword>
<keyword id="KW-0594">Phospholipid biosynthesis</keyword>
<keyword id="KW-1208">Phospholipid metabolism</keyword>
<keyword id="KW-0670">Pyruvate</keyword>
<keyword id="KW-0865">Zymogen</keyword>
<protein>
    <recommendedName>
        <fullName evidence="1">Phosphatidylserine decarboxylase proenzyme</fullName>
        <ecNumber evidence="1">4.1.1.65</ecNumber>
    </recommendedName>
    <component>
        <recommendedName>
            <fullName evidence="1">Phosphatidylserine decarboxylase alpha chain</fullName>
        </recommendedName>
    </component>
    <component>
        <recommendedName>
            <fullName evidence="1">Phosphatidylserine decarboxylase beta chain</fullName>
        </recommendedName>
    </component>
</protein>
<reference key="1">
    <citation type="submission" date="2007-09" db="EMBL/GenBank/DDBJ databases">
        <title>Complete genome sequencing of Rickettsia bellii.</title>
        <authorList>
            <person name="Madan A."/>
            <person name="Lee H."/>
            <person name="Madan A."/>
            <person name="Yoon J.-G."/>
            <person name="Ryu G.-Y."/>
            <person name="Dasch G."/>
            <person name="Ereemeva M."/>
        </authorList>
    </citation>
    <scope>NUCLEOTIDE SEQUENCE [LARGE SCALE GENOMIC DNA]</scope>
    <source>
        <strain>OSU 85-389</strain>
    </source>
</reference>
<feature type="chain" id="PRO_1000026686" description="Phosphatidylserine decarboxylase beta chain" evidence="1">
    <location>
        <begin position="1"/>
        <end position="187"/>
    </location>
</feature>
<feature type="chain" id="PRO_1000026687" description="Phosphatidylserine decarboxylase alpha chain" evidence="1">
    <location>
        <begin position="188"/>
        <end position="231"/>
    </location>
</feature>
<feature type="active site" description="Schiff-base intermediate with substrate; via pyruvic acid" evidence="1">
    <location>
        <position position="188"/>
    </location>
</feature>
<feature type="site" description="Cleavage (non-hydrolytic); by autocatalysis" evidence="1">
    <location>
        <begin position="187"/>
        <end position="188"/>
    </location>
</feature>
<feature type="modified residue" description="Pyruvic acid (Ser); by autocatalysis" evidence="1">
    <location>
        <position position="188"/>
    </location>
</feature>
<gene>
    <name evidence="1" type="primary">psd</name>
    <name type="ordered locus">A1I_03810</name>
</gene>
<evidence type="ECO:0000255" key="1">
    <source>
        <dbReference type="HAMAP-Rule" id="MF_00664"/>
    </source>
</evidence>
<organism>
    <name type="scientific">Rickettsia bellii (strain OSU 85-389)</name>
    <dbReference type="NCBI Taxonomy" id="391896"/>
    <lineage>
        <taxon>Bacteria</taxon>
        <taxon>Pseudomonadati</taxon>
        <taxon>Pseudomonadota</taxon>
        <taxon>Alphaproteobacteria</taxon>
        <taxon>Rickettsiales</taxon>
        <taxon>Rickettsiaceae</taxon>
        <taxon>Rickettsieae</taxon>
        <taxon>Rickettsia</taxon>
        <taxon>belli group</taxon>
    </lineage>
</organism>
<dbReference type="EC" id="4.1.1.65" evidence="1"/>
<dbReference type="EMBL" id="CP000849">
    <property type="protein sequence ID" value="ABV79115.1"/>
    <property type="molecule type" value="Genomic_DNA"/>
</dbReference>
<dbReference type="RefSeq" id="WP_011477630.1">
    <property type="nucleotide sequence ID" value="NC_009883.1"/>
</dbReference>
<dbReference type="SMR" id="A8GW88"/>
<dbReference type="KEGG" id="rbo:A1I_03810"/>
<dbReference type="HOGENOM" id="CLU_072492_0_0_5"/>
<dbReference type="UniPathway" id="UPA00558">
    <property type="reaction ID" value="UER00616"/>
</dbReference>
<dbReference type="GO" id="GO:0005886">
    <property type="term" value="C:plasma membrane"/>
    <property type="evidence" value="ECO:0007669"/>
    <property type="project" value="UniProtKB-SubCell"/>
</dbReference>
<dbReference type="GO" id="GO:0004609">
    <property type="term" value="F:phosphatidylserine decarboxylase activity"/>
    <property type="evidence" value="ECO:0007669"/>
    <property type="project" value="UniProtKB-UniRule"/>
</dbReference>
<dbReference type="GO" id="GO:0006646">
    <property type="term" value="P:phosphatidylethanolamine biosynthetic process"/>
    <property type="evidence" value="ECO:0007669"/>
    <property type="project" value="UniProtKB-UniRule"/>
</dbReference>
<dbReference type="HAMAP" id="MF_00664">
    <property type="entry name" value="PS_decarb_PSD_A"/>
    <property type="match status" value="1"/>
</dbReference>
<dbReference type="InterPro" id="IPR003817">
    <property type="entry name" value="PS_Dcarbxylase"/>
</dbReference>
<dbReference type="InterPro" id="IPR033175">
    <property type="entry name" value="PSD-A"/>
</dbReference>
<dbReference type="NCBIfam" id="NF003677">
    <property type="entry name" value="PRK05305.1-1"/>
    <property type="match status" value="1"/>
</dbReference>
<dbReference type="NCBIfam" id="NF003678">
    <property type="entry name" value="PRK05305.1-2"/>
    <property type="match status" value="1"/>
</dbReference>
<dbReference type="NCBIfam" id="NF003679">
    <property type="entry name" value="PRK05305.1-3"/>
    <property type="match status" value="1"/>
</dbReference>
<dbReference type="NCBIfam" id="NF003681">
    <property type="entry name" value="PRK05305.2-1"/>
    <property type="match status" value="1"/>
</dbReference>
<dbReference type="NCBIfam" id="NF003685">
    <property type="entry name" value="PRK05305.2-5"/>
    <property type="match status" value="1"/>
</dbReference>
<dbReference type="PANTHER" id="PTHR35809">
    <property type="entry name" value="ARCHAETIDYLSERINE DECARBOXYLASE PROENZYME-RELATED"/>
    <property type="match status" value="1"/>
</dbReference>
<dbReference type="PANTHER" id="PTHR35809:SF1">
    <property type="entry name" value="ARCHAETIDYLSERINE DECARBOXYLASE PROENZYME-RELATED"/>
    <property type="match status" value="1"/>
</dbReference>
<dbReference type="Pfam" id="PF02666">
    <property type="entry name" value="PS_Dcarbxylase"/>
    <property type="match status" value="1"/>
</dbReference>
<accession>A8GW88</accession>
<sequence>MKQYNDLFKIIHREGYIFIASFALVSFLLASFNEKLGCMGFIATAWCIYFFRNPDRFVPIGNDLVISPADGVIQEIKEALPPAELGLGDVEMIRVSIFLNIFNVHVNRIPANGKILALHYNPGKFFNASLDKASVYNERQSVLMETEQGQKIAFVQIAGLIARRIVCDLEESNEVKAGERYGIIRFGSRVDVYLPLKTALLVSKGQTAIGGETIIADFGRKKTAELQFERK</sequence>
<comment type="function">
    <text evidence="1">Catalyzes the formation of phosphatidylethanolamine (PtdEtn) from phosphatidylserine (PtdSer).</text>
</comment>
<comment type="catalytic activity">
    <reaction evidence="1">
        <text>a 1,2-diacyl-sn-glycero-3-phospho-L-serine + H(+) = a 1,2-diacyl-sn-glycero-3-phosphoethanolamine + CO2</text>
        <dbReference type="Rhea" id="RHEA:20828"/>
        <dbReference type="ChEBI" id="CHEBI:15378"/>
        <dbReference type="ChEBI" id="CHEBI:16526"/>
        <dbReference type="ChEBI" id="CHEBI:57262"/>
        <dbReference type="ChEBI" id="CHEBI:64612"/>
        <dbReference type="EC" id="4.1.1.65"/>
    </reaction>
</comment>
<comment type="cofactor">
    <cofactor evidence="1">
        <name>pyruvate</name>
        <dbReference type="ChEBI" id="CHEBI:15361"/>
    </cofactor>
    <text evidence="1">Binds 1 pyruvoyl group covalently per subunit.</text>
</comment>
<comment type="pathway">
    <text evidence="1">Phospholipid metabolism; phosphatidylethanolamine biosynthesis; phosphatidylethanolamine from CDP-diacylglycerol: step 2/2.</text>
</comment>
<comment type="subunit">
    <text evidence="1">Heterodimer of a large membrane-associated beta subunit and a small pyruvoyl-containing alpha subunit.</text>
</comment>
<comment type="subcellular location">
    <subcellularLocation>
        <location evidence="1">Cell membrane</location>
        <topology evidence="1">Peripheral membrane protein</topology>
    </subcellularLocation>
</comment>
<comment type="PTM">
    <text evidence="1">Is synthesized initially as an inactive proenzyme. Formation of the active enzyme involves a self-maturation process in which the active site pyruvoyl group is generated from an internal serine residue via an autocatalytic post-translational modification. Two non-identical subunits are generated from the proenzyme in this reaction, and the pyruvate is formed at the N-terminus of the alpha chain, which is derived from the carboxyl end of the proenzyme. The post-translation cleavage follows an unusual pathway, termed non-hydrolytic serinolysis, in which the side chain hydroxyl group of the serine supplies its oxygen atom to form the C-terminus of the beta chain, while the remainder of the serine residue undergoes an oxidative deamination to produce ammonia and the pyruvoyl prosthetic group on the alpha chain.</text>
</comment>
<comment type="similarity">
    <text evidence="1">Belongs to the phosphatidylserine decarboxylase family. PSD-A subfamily.</text>
</comment>